<reference key="1">
    <citation type="journal article" date="2007" name="Proc. Natl. Acad. Sci. U.S.A.">
        <title>Genome plasticity of BCG and impact on vaccine efficacy.</title>
        <authorList>
            <person name="Brosch R."/>
            <person name="Gordon S.V."/>
            <person name="Garnier T."/>
            <person name="Eiglmeier K."/>
            <person name="Frigui W."/>
            <person name="Valenti P."/>
            <person name="Dos Santos S."/>
            <person name="Duthoy S."/>
            <person name="Lacroix C."/>
            <person name="Garcia-Pelayo C."/>
            <person name="Inwald J.K."/>
            <person name="Golby P."/>
            <person name="Garcia J.N."/>
            <person name="Hewinson R.G."/>
            <person name="Behr M.A."/>
            <person name="Quail M.A."/>
            <person name="Churcher C."/>
            <person name="Barrell B.G."/>
            <person name="Parkhill J."/>
            <person name="Cole S.T."/>
        </authorList>
    </citation>
    <scope>NUCLEOTIDE SEQUENCE [LARGE SCALE GENOMIC DNA]</scope>
    <source>
        <strain>BCG / Pasteur 1173P2</strain>
    </source>
</reference>
<keyword id="KW-0450">Lipoyl</keyword>
<accession>A1KJN8</accession>
<gene>
    <name evidence="1" type="primary">gcvH</name>
    <name type="ordered locus">BCG_1861</name>
</gene>
<evidence type="ECO:0000255" key="1">
    <source>
        <dbReference type="HAMAP-Rule" id="MF_00272"/>
    </source>
</evidence>
<evidence type="ECO:0000255" key="2">
    <source>
        <dbReference type="PROSITE-ProRule" id="PRU01066"/>
    </source>
</evidence>
<organism>
    <name type="scientific">Mycobacterium bovis (strain BCG / Pasteur 1173P2)</name>
    <dbReference type="NCBI Taxonomy" id="410289"/>
    <lineage>
        <taxon>Bacteria</taxon>
        <taxon>Bacillati</taxon>
        <taxon>Actinomycetota</taxon>
        <taxon>Actinomycetes</taxon>
        <taxon>Mycobacteriales</taxon>
        <taxon>Mycobacteriaceae</taxon>
        <taxon>Mycobacterium</taxon>
        <taxon>Mycobacterium tuberculosis complex</taxon>
    </lineage>
</organism>
<proteinExistence type="inferred from homology"/>
<comment type="function">
    <text evidence="1">The glycine cleavage system catalyzes the degradation of glycine. The H protein shuttles the methylamine group of glycine from the P protein to the T protein.</text>
</comment>
<comment type="cofactor">
    <cofactor evidence="1">
        <name>(R)-lipoate</name>
        <dbReference type="ChEBI" id="CHEBI:83088"/>
    </cofactor>
    <text evidence="1">Binds 1 lipoyl cofactor covalently.</text>
</comment>
<comment type="subunit">
    <text evidence="1">The glycine cleavage system is composed of four proteins: P, T, L and H.</text>
</comment>
<comment type="similarity">
    <text evidence="1">Belongs to the GcvH family.</text>
</comment>
<dbReference type="EMBL" id="AM408590">
    <property type="protein sequence ID" value="CAL71848.1"/>
    <property type="molecule type" value="Genomic_DNA"/>
</dbReference>
<dbReference type="RefSeq" id="WP_003409234.1">
    <property type="nucleotide sequence ID" value="NC_008769.1"/>
</dbReference>
<dbReference type="SMR" id="A1KJN8"/>
<dbReference type="KEGG" id="mbb:BCG_1861"/>
<dbReference type="HOGENOM" id="CLU_097408_2_2_11"/>
<dbReference type="Proteomes" id="UP000001472">
    <property type="component" value="Chromosome"/>
</dbReference>
<dbReference type="GO" id="GO:0005829">
    <property type="term" value="C:cytosol"/>
    <property type="evidence" value="ECO:0007669"/>
    <property type="project" value="TreeGrafter"/>
</dbReference>
<dbReference type="GO" id="GO:0005960">
    <property type="term" value="C:glycine cleavage complex"/>
    <property type="evidence" value="ECO:0007669"/>
    <property type="project" value="InterPro"/>
</dbReference>
<dbReference type="GO" id="GO:0019464">
    <property type="term" value="P:glycine decarboxylation via glycine cleavage system"/>
    <property type="evidence" value="ECO:0007669"/>
    <property type="project" value="UniProtKB-UniRule"/>
</dbReference>
<dbReference type="CDD" id="cd06848">
    <property type="entry name" value="GCS_H"/>
    <property type="match status" value="1"/>
</dbReference>
<dbReference type="Gene3D" id="2.40.50.100">
    <property type="match status" value="1"/>
</dbReference>
<dbReference type="HAMAP" id="MF_00272">
    <property type="entry name" value="GcvH"/>
    <property type="match status" value="1"/>
</dbReference>
<dbReference type="InterPro" id="IPR003016">
    <property type="entry name" value="2-oxoA_DH_lipoyl-BS"/>
</dbReference>
<dbReference type="InterPro" id="IPR000089">
    <property type="entry name" value="Biotin_lipoyl"/>
</dbReference>
<dbReference type="InterPro" id="IPR002930">
    <property type="entry name" value="GCV_H"/>
</dbReference>
<dbReference type="InterPro" id="IPR033753">
    <property type="entry name" value="GCV_H/Fam206"/>
</dbReference>
<dbReference type="InterPro" id="IPR017453">
    <property type="entry name" value="GCV_H_sub"/>
</dbReference>
<dbReference type="InterPro" id="IPR011053">
    <property type="entry name" value="Single_hybrid_motif"/>
</dbReference>
<dbReference type="NCBIfam" id="TIGR00527">
    <property type="entry name" value="gcvH"/>
    <property type="match status" value="1"/>
</dbReference>
<dbReference type="NCBIfam" id="NF002270">
    <property type="entry name" value="PRK01202.1"/>
    <property type="match status" value="1"/>
</dbReference>
<dbReference type="PANTHER" id="PTHR11715">
    <property type="entry name" value="GLYCINE CLEAVAGE SYSTEM H PROTEIN"/>
    <property type="match status" value="1"/>
</dbReference>
<dbReference type="PANTHER" id="PTHR11715:SF3">
    <property type="entry name" value="GLYCINE CLEAVAGE SYSTEM H PROTEIN-RELATED"/>
    <property type="match status" value="1"/>
</dbReference>
<dbReference type="Pfam" id="PF01597">
    <property type="entry name" value="GCV_H"/>
    <property type="match status" value="1"/>
</dbReference>
<dbReference type="SUPFAM" id="SSF51230">
    <property type="entry name" value="Single hybrid motif"/>
    <property type="match status" value="1"/>
</dbReference>
<dbReference type="PROSITE" id="PS50968">
    <property type="entry name" value="BIOTINYL_LIPOYL"/>
    <property type="match status" value="1"/>
</dbReference>
<dbReference type="PROSITE" id="PS00189">
    <property type="entry name" value="LIPOYL"/>
    <property type="match status" value="1"/>
</dbReference>
<sequence length="134" mass="14180">MSDIPSDLHYTAEHEWIRRSGDDTVRVGITDYAQSALGDVVFVQLPVIGTAVTAGETFGEVESTKSVSDLYAPISGKVSAVNSDLDGTPQLVNSDPYGAGWLLDIQVDSSDVAALESALTTLLDAEAYRGTLTE</sequence>
<protein>
    <recommendedName>
        <fullName evidence="1">Glycine cleavage system H protein</fullName>
    </recommendedName>
</protein>
<name>GCSH_MYCBP</name>
<feature type="chain" id="PRO_0000302391" description="Glycine cleavage system H protein">
    <location>
        <begin position="1"/>
        <end position="134"/>
    </location>
</feature>
<feature type="domain" description="Lipoyl-binding" evidence="2">
    <location>
        <begin position="24"/>
        <end position="106"/>
    </location>
</feature>
<feature type="modified residue" description="N6-lipoyllysine" evidence="1">
    <location>
        <position position="65"/>
    </location>
</feature>